<name>TPIS_XYLF2</name>
<evidence type="ECO:0000255" key="1">
    <source>
        <dbReference type="HAMAP-Rule" id="MF_00147"/>
    </source>
</evidence>
<dbReference type="EC" id="5.3.1.1" evidence="1"/>
<dbReference type="EMBL" id="CP001011">
    <property type="protein sequence ID" value="ACB91689.1"/>
    <property type="molecule type" value="Genomic_DNA"/>
</dbReference>
<dbReference type="RefSeq" id="WP_004087940.1">
    <property type="nucleotide sequence ID" value="NC_010577.1"/>
</dbReference>
<dbReference type="SMR" id="B2I782"/>
<dbReference type="GeneID" id="93903945"/>
<dbReference type="KEGG" id="xfn:XfasM23_0238"/>
<dbReference type="HOGENOM" id="CLU_024251_2_3_6"/>
<dbReference type="UniPathway" id="UPA00109">
    <property type="reaction ID" value="UER00189"/>
</dbReference>
<dbReference type="UniPathway" id="UPA00138"/>
<dbReference type="Proteomes" id="UP000001698">
    <property type="component" value="Chromosome"/>
</dbReference>
<dbReference type="GO" id="GO:0005829">
    <property type="term" value="C:cytosol"/>
    <property type="evidence" value="ECO:0007669"/>
    <property type="project" value="TreeGrafter"/>
</dbReference>
<dbReference type="GO" id="GO:0004807">
    <property type="term" value="F:triose-phosphate isomerase activity"/>
    <property type="evidence" value="ECO:0007669"/>
    <property type="project" value="UniProtKB-UniRule"/>
</dbReference>
<dbReference type="GO" id="GO:0006094">
    <property type="term" value="P:gluconeogenesis"/>
    <property type="evidence" value="ECO:0007669"/>
    <property type="project" value="UniProtKB-UniRule"/>
</dbReference>
<dbReference type="GO" id="GO:0046166">
    <property type="term" value="P:glyceraldehyde-3-phosphate biosynthetic process"/>
    <property type="evidence" value="ECO:0007669"/>
    <property type="project" value="TreeGrafter"/>
</dbReference>
<dbReference type="GO" id="GO:0019563">
    <property type="term" value="P:glycerol catabolic process"/>
    <property type="evidence" value="ECO:0007669"/>
    <property type="project" value="TreeGrafter"/>
</dbReference>
<dbReference type="GO" id="GO:0006096">
    <property type="term" value="P:glycolytic process"/>
    <property type="evidence" value="ECO:0007669"/>
    <property type="project" value="UniProtKB-UniRule"/>
</dbReference>
<dbReference type="CDD" id="cd00311">
    <property type="entry name" value="TIM"/>
    <property type="match status" value="1"/>
</dbReference>
<dbReference type="FunFam" id="3.20.20.70:FF:000016">
    <property type="entry name" value="Triosephosphate isomerase"/>
    <property type="match status" value="1"/>
</dbReference>
<dbReference type="Gene3D" id="3.20.20.70">
    <property type="entry name" value="Aldolase class I"/>
    <property type="match status" value="1"/>
</dbReference>
<dbReference type="HAMAP" id="MF_00147_B">
    <property type="entry name" value="TIM_B"/>
    <property type="match status" value="1"/>
</dbReference>
<dbReference type="InterPro" id="IPR013785">
    <property type="entry name" value="Aldolase_TIM"/>
</dbReference>
<dbReference type="InterPro" id="IPR035990">
    <property type="entry name" value="TIM_sf"/>
</dbReference>
<dbReference type="InterPro" id="IPR022896">
    <property type="entry name" value="TrioseP_Isoase_bac/euk"/>
</dbReference>
<dbReference type="InterPro" id="IPR000652">
    <property type="entry name" value="Triosephosphate_isomerase"/>
</dbReference>
<dbReference type="InterPro" id="IPR020861">
    <property type="entry name" value="Triosephosphate_isomerase_AS"/>
</dbReference>
<dbReference type="NCBIfam" id="TIGR00419">
    <property type="entry name" value="tim"/>
    <property type="match status" value="1"/>
</dbReference>
<dbReference type="PANTHER" id="PTHR21139">
    <property type="entry name" value="TRIOSEPHOSPHATE ISOMERASE"/>
    <property type="match status" value="1"/>
</dbReference>
<dbReference type="PANTHER" id="PTHR21139:SF42">
    <property type="entry name" value="TRIOSEPHOSPHATE ISOMERASE"/>
    <property type="match status" value="1"/>
</dbReference>
<dbReference type="Pfam" id="PF00121">
    <property type="entry name" value="TIM"/>
    <property type="match status" value="1"/>
</dbReference>
<dbReference type="SUPFAM" id="SSF51351">
    <property type="entry name" value="Triosephosphate isomerase (TIM)"/>
    <property type="match status" value="1"/>
</dbReference>
<dbReference type="PROSITE" id="PS00171">
    <property type="entry name" value="TIM_1"/>
    <property type="match status" value="1"/>
</dbReference>
<dbReference type="PROSITE" id="PS51440">
    <property type="entry name" value="TIM_2"/>
    <property type="match status" value="1"/>
</dbReference>
<feature type="chain" id="PRO_1000096551" description="Triosephosphate isomerase">
    <location>
        <begin position="1"/>
        <end position="249"/>
    </location>
</feature>
<feature type="active site" description="Electrophile" evidence="1">
    <location>
        <position position="94"/>
    </location>
</feature>
<feature type="active site" description="Proton acceptor" evidence="1">
    <location>
        <position position="166"/>
    </location>
</feature>
<feature type="binding site" evidence="1">
    <location>
        <begin position="9"/>
        <end position="11"/>
    </location>
    <ligand>
        <name>substrate</name>
    </ligand>
</feature>
<feature type="binding site" evidence="1">
    <location>
        <position position="172"/>
    </location>
    <ligand>
        <name>substrate</name>
    </ligand>
</feature>
<feature type="binding site" evidence="1">
    <location>
        <begin position="232"/>
        <end position="233"/>
    </location>
    <ligand>
        <name>substrate</name>
    </ligand>
</feature>
<organism>
    <name type="scientific">Xylella fastidiosa (strain M23)</name>
    <dbReference type="NCBI Taxonomy" id="405441"/>
    <lineage>
        <taxon>Bacteria</taxon>
        <taxon>Pseudomonadati</taxon>
        <taxon>Pseudomonadota</taxon>
        <taxon>Gammaproteobacteria</taxon>
        <taxon>Lysobacterales</taxon>
        <taxon>Lysobacteraceae</taxon>
        <taxon>Xylella</taxon>
    </lineage>
</organism>
<proteinExistence type="inferred from homology"/>
<keyword id="KW-0963">Cytoplasm</keyword>
<keyword id="KW-0312">Gluconeogenesis</keyword>
<keyword id="KW-0324">Glycolysis</keyword>
<keyword id="KW-0413">Isomerase</keyword>
<protein>
    <recommendedName>
        <fullName evidence="1">Triosephosphate isomerase</fullName>
        <shortName evidence="1">TIM</shortName>
        <shortName evidence="1">TPI</shortName>
        <ecNumber evidence="1">5.3.1.1</ecNumber>
    </recommendedName>
    <alternativeName>
        <fullName evidence="1">Triose-phosphate isomerase</fullName>
    </alternativeName>
</protein>
<reference key="1">
    <citation type="journal article" date="2010" name="J. Bacteriol.">
        <title>Whole genome sequences of two Xylella fastidiosa strains (M12 and M23) causing almond leaf scorch disease in California.</title>
        <authorList>
            <person name="Chen J."/>
            <person name="Xie G."/>
            <person name="Han S."/>
            <person name="Chertkov O."/>
            <person name="Sims D."/>
            <person name="Civerolo E.L."/>
        </authorList>
    </citation>
    <scope>NUCLEOTIDE SEQUENCE [LARGE SCALE GENOMIC DNA]</scope>
    <source>
        <strain>M23</strain>
    </source>
</reference>
<gene>
    <name evidence="1" type="primary">tpiA</name>
    <name type="ordered locus">XfasM23_0238</name>
</gene>
<sequence length="249" mass="26060">MRPKIVAGNWKLHGSHAFAQALVAQVAAGLPLPGVSVIILPPLLYLSDLAQRFKGEGLAFGAQNVSHHDKGAYTGEVSAAMVADVGAHYTLVGHSERREYHHEDSELVARKFAAALSAGLRPILCVGESLPQREAGQAEVAIAMQLAPVLALVGPQGVARGLIAYEPVWAIGTGRHADPSQVQAMHAFIRGEIARQDARIGDSLLILYGGGIKPCNAAELFSQQDVDGGLIGGASLVADDFLAIARATV</sequence>
<accession>B2I782</accession>
<comment type="function">
    <text evidence="1">Involved in the gluconeogenesis. Catalyzes stereospecifically the conversion of dihydroxyacetone phosphate (DHAP) to D-glyceraldehyde-3-phosphate (G3P).</text>
</comment>
<comment type="catalytic activity">
    <reaction evidence="1">
        <text>D-glyceraldehyde 3-phosphate = dihydroxyacetone phosphate</text>
        <dbReference type="Rhea" id="RHEA:18585"/>
        <dbReference type="ChEBI" id="CHEBI:57642"/>
        <dbReference type="ChEBI" id="CHEBI:59776"/>
        <dbReference type="EC" id="5.3.1.1"/>
    </reaction>
</comment>
<comment type="pathway">
    <text evidence="1">Carbohydrate biosynthesis; gluconeogenesis.</text>
</comment>
<comment type="pathway">
    <text evidence="1">Carbohydrate degradation; glycolysis; D-glyceraldehyde 3-phosphate from glycerone phosphate: step 1/1.</text>
</comment>
<comment type="subunit">
    <text evidence="1">Homodimer.</text>
</comment>
<comment type="subcellular location">
    <subcellularLocation>
        <location evidence="1">Cytoplasm</location>
    </subcellularLocation>
</comment>
<comment type="similarity">
    <text evidence="1">Belongs to the triosephosphate isomerase family.</text>
</comment>